<name>PTH_STRZJ</name>
<keyword id="KW-0963">Cytoplasm</keyword>
<keyword id="KW-0378">Hydrolase</keyword>
<keyword id="KW-0694">RNA-binding</keyword>
<keyword id="KW-0820">tRNA-binding</keyword>
<sequence length="189" mass="21405">MTKLLVGLGNPGDKYFETKHNVGFMLIDQLAKKQNVTFTHDKIFQADLASFFLNGEKIYLVKPTTFMNESGKAVHALLTYYGLDIDDLLIIYDDLDMEVGKIRLRAKGSAGGHNGIKSIIQHIGTQVFNRVKIGIGRPKNGMSVVHHVLSKFDRDDYIGILQSIDKVDDSVNYYLQEKNFEKTMQRYNG</sequence>
<dbReference type="EC" id="3.1.1.29" evidence="1"/>
<dbReference type="EMBL" id="CP000919">
    <property type="protein sequence ID" value="ACO19333.1"/>
    <property type="molecule type" value="Genomic_DNA"/>
</dbReference>
<dbReference type="RefSeq" id="WP_000163930.1">
    <property type="nucleotide sequence ID" value="NC_012466.1"/>
</dbReference>
<dbReference type="SMR" id="C1CH85"/>
<dbReference type="KEGG" id="sjj:SPJ_0005"/>
<dbReference type="HOGENOM" id="CLU_062456_4_1_9"/>
<dbReference type="Proteomes" id="UP000002206">
    <property type="component" value="Chromosome"/>
</dbReference>
<dbReference type="GO" id="GO:0005737">
    <property type="term" value="C:cytoplasm"/>
    <property type="evidence" value="ECO:0007669"/>
    <property type="project" value="UniProtKB-SubCell"/>
</dbReference>
<dbReference type="GO" id="GO:0004045">
    <property type="term" value="F:peptidyl-tRNA hydrolase activity"/>
    <property type="evidence" value="ECO:0007669"/>
    <property type="project" value="UniProtKB-UniRule"/>
</dbReference>
<dbReference type="GO" id="GO:0000049">
    <property type="term" value="F:tRNA binding"/>
    <property type="evidence" value="ECO:0007669"/>
    <property type="project" value="UniProtKB-UniRule"/>
</dbReference>
<dbReference type="GO" id="GO:0006515">
    <property type="term" value="P:protein quality control for misfolded or incompletely synthesized proteins"/>
    <property type="evidence" value="ECO:0007669"/>
    <property type="project" value="UniProtKB-UniRule"/>
</dbReference>
<dbReference type="GO" id="GO:0072344">
    <property type="term" value="P:rescue of stalled ribosome"/>
    <property type="evidence" value="ECO:0007669"/>
    <property type="project" value="UniProtKB-UniRule"/>
</dbReference>
<dbReference type="CDD" id="cd00462">
    <property type="entry name" value="PTH"/>
    <property type="match status" value="1"/>
</dbReference>
<dbReference type="FunFam" id="3.40.50.1470:FF:000001">
    <property type="entry name" value="Peptidyl-tRNA hydrolase"/>
    <property type="match status" value="1"/>
</dbReference>
<dbReference type="Gene3D" id="3.40.50.1470">
    <property type="entry name" value="Peptidyl-tRNA hydrolase"/>
    <property type="match status" value="1"/>
</dbReference>
<dbReference type="HAMAP" id="MF_00083">
    <property type="entry name" value="Pept_tRNA_hydro_bact"/>
    <property type="match status" value="1"/>
</dbReference>
<dbReference type="InterPro" id="IPR001328">
    <property type="entry name" value="Pept_tRNA_hydro"/>
</dbReference>
<dbReference type="InterPro" id="IPR018171">
    <property type="entry name" value="Pept_tRNA_hydro_CS"/>
</dbReference>
<dbReference type="InterPro" id="IPR036416">
    <property type="entry name" value="Pept_tRNA_hydro_sf"/>
</dbReference>
<dbReference type="NCBIfam" id="TIGR00447">
    <property type="entry name" value="pth"/>
    <property type="match status" value="1"/>
</dbReference>
<dbReference type="PANTHER" id="PTHR17224">
    <property type="entry name" value="PEPTIDYL-TRNA HYDROLASE"/>
    <property type="match status" value="1"/>
</dbReference>
<dbReference type="PANTHER" id="PTHR17224:SF1">
    <property type="entry name" value="PEPTIDYL-TRNA HYDROLASE"/>
    <property type="match status" value="1"/>
</dbReference>
<dbReference type="Pfam" id="PF01195">
    <property type="entry name" value="Pept_tRNA_hydro"/>
    <property type="match status" value="1"/>
</dbReference>
<dbReference type="SUPFAM" id="SSF53178">
    <property type="entry name" value="Peptidyl-tRNA hydrolase-like"/>
    <property type="match status" value="1"/>
</dbReference>
<dbReference type="PROSITE" id="PS01195">
    <property type="entry name" value="PEPT_TRNA_HYDROL_1"/>
    <property type="match status" value="1"/>
</dbReference>
<dbReference type="PROSITE" id="PS01196">
    <property type="entry name" value="PEPT_TRNA_HYDROL_2"/>
    <property type="match status" value="1"/>
</dbReference>
<organism>
    <name type="scientific">Streptococcus pneumoniae (strain JJA)</name>
    <dbReference type="NCBI Taxonomy" id="488222"/>
    <lineage>
        <taxon>Bacteria</taxon>
        <taxon>Bacillati</taxon>
        <taxon>Bacillota</taxon>
        <taxon>Bacilli</taxon>
        <taxon>Lactobacillales</taxon>
        <taxon>Streptococcaceae</taxon>
        <taxon>Streptococcus</taxon>
    </lineage>
</organism>
<evidence type="ECO:0000255" key="1">
    <source>
        <dbReference type="HAMAP-Rule" id="MF_00083"/>
    </source>
</evidence>
<accession>C1CH85</accession>
<comment type="function">
    <text evidence="1">Hydrolyzes ribosome-free peptidyl-tRNAs (with 1 or more amino acids incorporated), which drop off the ribosome during protein synthesis, or as a result of ribosome stalling.</text>
</comment>
<comment type="function">
    <text evidence="1">Catalyzes the release of premature peptidyl moieties from peptidyl-tRNA molecules trapped in stalled 50S ribosomal subunits, and thus maintains levels of free tRNAs and 50S ribosomes.</text>
</comment>
<comment type="catalytic activity">
    <reaction evidence="1">
        <text>an N-acyl-L-alpha-aminoacyl-tRNA + H2O = an N-acyl-L-amino acid + a tRNA + H(+)</text>
        <dbReference type="Rhea" id="RHEA:54448"/>
        <dbReference type="Rhea" id="RHEA-COMP:10123"/>
        <dbReference type="Rhea" id="RHEA-COMP:13883"/>
        <dbReference type="ChEBI" id="CHEBI:15377"/>
        <dbReference type="ChEBI" id="CHEBI:15378"/>
        <dbReference type="ChEBI" id="CHEBI:59874"/>
        <dbReference type="ChEBI" id="CHEBI:78442"/>
        <dbReference type="ChEBI" id="CHEBI:138191"/>
        <dbReference type="EC" id="3.1.1.29"/>
    </reaction>
</comment>
<comment type="subunit">
    <text evidence="1">Monomer.</text>
</comment>
<comment type="subcellular location">
    <subcellularLocation>
        <location evidence="1">Cytoplasm</location>
    </subcellularLocation>
</comment>
<comment type="similarity">
    <text evidence="1">Belongs to the PTH family.</text>
</comment>
<gene>
    <name evidence="1" type="primary">pth</name>
    <name type="ordered locus">SPJ_0005</name>
</gene>
<protein>
    <recommendedName>
        <fullName evidence="1">Peptidyl-tRNA hydrolase</fullName>
        <shortName evidence="1">Pth</shortName>
        <ecNumber evidence="1">3.1.1.29</ecNumber>
    </recommendedName>
</protein>
<feature type="chain" id="PRO_1000118413" description="Peptidyl-tRNA hydrolase">
    <location>
        <begin position="1"/>
        <end position="189"/>
    </location>
</feature>
<feature type="active site" description="Proton acceptor" evidence="1">
    <location>
        <position position="20"/>
    </location>
</feature>
<feature type="binding site" evidence="1">
    <location>
        <position position="15"/>
    </location>
    <ligand>
        <name>tRNA</name>
        <dbReference type="ChEBI" id="CHEBI:17843"/>
    </ligand>
</feature>
<feature type="binding site" evidence="1">
    <location>
        <position position="66"/>
    </location>
    <ligand>
        <name>tRNA</name>
        <dbReference type="ChEBI" id="CHEBI:17843"/>
    </ligand>
</feature>
<feature type="binding site" evidence="1">
    <location>
        <position position="68"/>
    </location>
    <ligand>
        <name>tRNA</name>
        <dbReference type="ChEBI" id="CHEBI:17843"/>
    </ligand>
</feature>
<feature type="binding site" evidence="1">
    <location>
        <position position="114"/>
    </location>
    <ligand>
        <name>tRNA</name>
        <dbReference type="ChEBI" id="CHEBI:17843"/>
    </ligand>
</feature>
<feature type="site" description="Discriminates between blocked and unblocked aminoacyl-tRNA" evidence="1">
    <location>
        <position position="10"/>
    </location>
</feature>
<feature type="site" description="Stabilizes the basic form of H active site to accept a proton" evidence="1">
    <location>
        <position position="93"/>
    </location>
</feature>
<proteinExistence type="inferred from homology"/>
<reference key="1">
    <citation type="journal article" date="2010" name="Genome Biol.">
        <title>Structure and dynamics of the pan-genome of Streptococcus pneumoniae and closely related species.</title>
        <authorList>
            <person name="Donati C."/>
            <person name="Hiller N.L."/>
            <person name="Tettelin H."/>
            <person name="Muzzi A."/>
            <person name="Croucher N.J."/>
            <person name="Angiuoli S.V."/>
            <person name="Oggioni M."/>
            <person name="Dunning Hotopp J.C."/>
            <person name="Hu F.Z."/>
            <person name="Riley D.R."/>
            <person name="Covacci A."/>
            <person name="Mitchell T.J."/>
            <person name="Bentley S.D."/>
            <person name="Kilian M."/>
            <person name="Ehrlich G.D."/>
            <person name="Rappuoli R."/>
            <person name="Moxon E.R."/>
            <person name="Masignani V."/>
        </authorList>
    </citation>
    <scope>NUCLEOTIDE SEQUENCE [LARGE SCALE GENOMIC DNA]</scope>
    <source>
        <strain>JJA</strain>
    </source>
</reference>